<sequence>MATPHINAEMGDFADVVLMPGDPLRAKFIAETFLQDVREVNNVRGMLGFTGTYKGRKISVMGHGMGIPSCSIYAKELITDFGVKKIIRVGSCGAVRTDVKLRDVVIGMGACTDSKVNRMRFKDHDYAAIADFEMTRNAVDAAKAKGVNVRVGNLFSADLFYTPDPQMFDVMEKYGILGVEMEAAGICGVAAEFGAKALTICTVSDHIRTGEQTTAAERQTTFNDMIEIALESVLLGDNA</sequence>
<name>DEOD_YERPA</name>
<proteinExistence type="inferred from homology"/>
<comment type="function">
    <text evidence="2">Catalyzes the reversible phosphorolytic breakdown of the N-glycosidic bond in the beta-(deoxy)ribonucleoside molecules, with the formation of the corresponding free purine bases and pentose-1-phosphate.</text>
</comment>
<comment type="catalytic activity">
    <reaction evidence="2">
        <text>a purine D-ribonucleoside + phosphate = a purine nucleobase + alpha-D-ribose 1-phosphate</text>
        <dbReference type="Rhea" id="RHEA:19805"/>
        <dbReference type="ChEBI" id="CHEBI:26386"/>
        <dbReference type="ChEBI" id="CHEBI:43474"/>
        <dbReference type="ChEBI" id="CHEBI:57720"/>
        <dbReference type="ChEBI" id="CHEBI:142355"/>
        <dbReference type="EC" id="2.4.2.1"/>
    </reaction>
</comment>
<comment type="catalytic activity">
    <reaction evidence="2">
        <text>a purine 2'-deoxy-D-ribonucleoside + phosphate = a purine nucleobase + 2-deoxy-alpha-D-ribose 1-phosphate</text>
        <dbReference type="Rhea" id="RHEA:36431"/>
        <dbReference type="ChEBI" id="CHEBI:26386"/>
        <dbReference type="ChEBI" id="CHEBI:43474"/>
        <dbReference type="ChEBI" id="CHEBI:57259"/>
        <dbReference type="ChEBI" id="CHEBI:142361"/>
        <dbReference type="EC" id="2.4.2.1"/>
    </reaction>
</comment>
<comment type="subunit">
    <text evidence="2">Homohexamer; trimer of homodimers.</text>
</comment>
<comment type="similarity">
    <text evidence="2">Belongs to the PNP/UDP phosphorylase family.</text>
</comment>
<dbReference type="EC" id="2.4.2.1" evidence="2"/>
<dbReference type="EMBL" id="CP000308">
    <property type="protein sequence ID" value="ABG15806.1"/>
    <property type="molecule type" value="Genomic_DNA"/>
</dbReference>
<dbReference type="RefSeq" id="WP_002209217.1">
    <property type="nucleotide sequence ID" value="NZ_CP009906.1"/>
</dbReference>
<dbReference type="SMR" id="Q1C166"/>
<dbReference type="GeneID" id="57974168"/>
<dbReference type="KEGG" id="ypa:YPA_3844"/>
<dbReference type="Proteomes" id="UP000001971">
    <property type="component" value="Chromosome"/>
</dbReference>
<dbReference type="GO" id="GO:0005829">
    <property type="term" value="C:cytosol"/>
    <property type="evidence" value="ECO:0007669"/>
    <property type="project" value="TreeGrafter"/>
</dbReference>
<dbReference type="GO" id="GO:0004731">
    <property type="term" value="F:purine-nucleoside phosphorylase activity"/>
    <property type="evidence" value="ECO:0007669"/>
    <property type="project" value="UniProtKB-UniRule"/>
</dbReference>
<dbReference type="GO" id="GO:0006152">
    <property type="term" value="P:purine nucleoside catabolic process"/>
    <property type="evidence" value="ECO:0007669"/>
    <property type="project" value="TreeGrafter"/>
</dbReference>
<dbReference type="CDD" id="cd09006">
    <property type="entry name" value="PNP_EcPNPI-like"/>
    <property type="match status" value="1"/>
</dbReference>
<dbReference type="FunFam" id="3.40.50.1580:FF:000002">
    <property type="entry name" value="Purine nucleoside phosphorylase DeoD-type"/>
    <property type="match status" value="1"/>
</dbReference>
<dbReference type="Gene3D" id="3.40.50.1580">
    <property type="entry name" value="Nucleoside phosphorylase domain"/>
    <property type="match status" value="1"/>
</dbReference>
<dbReference type="HAMAP" id="MF_01627">
    <property type="entry name" value="Pur_nucleosid_phosp"/>
    <property type="match status" value="1"/>
</dbReference>
<dbReference type="InterPro" id="IPR004402">
    <property type="entry name" value="DeoD-type"/>
</dbReference>
<dbReference type="InterPro" id="IPR018016">
    <property type="entry name" value="Nucleoside_phosphorylase_CS"/>
</dbReference>
<dbReference type="InterPro" id="IPR000845">
    <property type="entry name" value="Nucleoside_phosphorylase_d"/>
</dbReference>
<dbReference type="InterPro" id="IPR035994">
    <property type="entry name" value="Nucleoside_phosphorylase_sf"/>
</dbReference>
<dbReference type="NCBIfam" id="TIGR00107">
    <property type="entry name" value="deoD"/>
    <property type="match status" value="1"/>
</dbReference>
<dbReference type="NCBIfam" id="NF004489">
    <property type="entry name" value="PRK05819.1"/>
    <property type="match status" value="1"/>
</dbReference>
<dbReference type="NCBIfam" id="NF009914">
    <property type="entry name" value="PRK13374.1"/>
    <property type="match status" value="1"/>
</dbReference>
<dbReference type="PANTHER" id="PTHR43691:SF2">
    <property type="entry name" value="PURINE NUCLEOSIDE PHOSPHORYLASE DEOD-TYPE"/>
    <property type="match status" value="1"/>
</dbReference>
<dbReference type="PANTHER" id="PTHR43691">
    <property type="entry name" value="URIDINE PHOSPHORYLASE"/>
    <property type="match status" value="1"/>
</dbReference>
<dbReference type="Pfam" id="PF01048">
    <property type="entry name" value="PNP_UDP_1"/>
    <property type="match status" value="1"/>
</dbReference>
<dbReference type="SUPFAM" id="SSF53167">
    <property type="entry name" value="Purine and uridine phosphorylases"/>
    <property type="match status" value="1"/>
</dbReference>
<dbReference type="PROSITE" id="PS01232">
    <property type="entry name" value="PNP_UDP_1"/>
    <property type="match status" value="1"/>
</dbReference>
<keyword id="KW-0328">Glycosyltransferase</keyword>
<keyword id="KW-0808">Transferase</keyword>
<accession>Q1C166</accession>
<feature type="chain" id="PRO_1000069651" description="Purine nucleoside phosphorylase DeoD-type">
    <location>
        <begin position="1"/>
        <end position="239"/>
    </location>
</feature>
<feature type="active site" description="Proton donor" evidence="2">
    <location>
        <position position="205"/>
    </location>
</feature>
<feature type="binding site" evidence="1">
    <location>
        <position position="5"/>
    </location>
    <ligand>
        <name>a purine D-ribonucleoside</name>
        <dbReference type="ChEBI" id="CHEBI:142355"/>
        <note>ligand shared between dimeric partners</note>
    </ligand>
</feature>
<feature type="binding site" description="in other chain" evidence="1">
    <location>
        <position position="21"/>
    </location>
    <ligand>
        <name>phosphate</name>
        <dbReference type="ChEBI" id="CHEBI:43474"/>
        <note>ligand shared between dimeric partners</note>
    </ligand>
</feature>
<feature type="binding site" description="in other chain" evidence="1">
    <location>
        <position position="25"/>
    </location>
    <ligand>
        <name>phosphate</name>
        <dbReference type="ChEBI" id="CHEBI:43474"/>
        <note>ligand shared between dimeric partners</note>
    </ligand>
</feature>
<feature type="binding site" evidence="1">
    <location>
        <position position="44"/>
    </location>
    <ligand>
        <name>phosphate</name>
        <dbReference type="ChEBI" id="CHEBI:43474"/>
        <note>ligand shared between dimeric partners</note>
    </ligand>
</feature>
<feature type="binding site" description="in other chain" evidence="1">
    <location>
        <begin position="88"/>
        <end position="91"/>
    </location>
    <ligand>
        <name>phosphate</name>
        <dbReference type="ChEBI" id="CHEBI:43474"/>
        <note>ligand shared between dimeric partners</note>
    </ligand>
</feature>
<feature type="binding site" description="in other chain" evidence="1">
    <location>
        <begin position="180"/>
        <end position="182"/>
    </location>
    <ligand>
        <name>a purine D-ribonucleoside</name>
        <dbReference type="ChEBI" id="CHEBI:142355"/>
        <note>ligand shared between dimeric partners</note>
    </ligand>
</feature>
<feature type="binding site" description="in other chain" evidence="1">
    <location>
        <begin position="204"/>
        <end position="205"/>
    </location>
    <ligand>
        <name>a purine D-ribonucleoside</name>
        <dbReference type="ChEBI" id="CHEBI:142355"/>
        <note>ligand shared between dimeric partners</note>
    </ligand>
</feature>
<feature type="site" description="Important for catalytic activity" evidence="2">
    <location>
        <position position="218"/>
    </location>
</feature>
<organism>
    <name type="scientific">Yersinia pestis bv. Antiqua (strain Antiqua)</name>
    <dbReference type="NCBI Taxonomy" id="360102"/>
    <lineage>
        <taxon>Bacteria</taxon>
        <taxon>Pseudomonadati</taxon>
        <taxon>Pseudomonadota</taxon>
        <taxon>Gammaproteobacteria</taxon>
        <taxon>Enterobacterales</taxon>
        <taxon>Yersiniaceae</taxon>
        <taxon>Yersinia</taxon>
    </lineage>
</organism>
<protein>
    <recommendedName>
        <fullName evidence="2">Purine nucleoside phosphorylase DeoD-type</fullName>
        <shortName evidence="2">PNP</shortName>
        <ecNumber evidence="2">2.4.2.1</ecNumber>
    </recommendedName>
</protein>
<gene>
    <name evidence="2" type="primary">deoD</name>
    <name type="ordered locus">YPA_3844</name>
</gene>
<evidence type="ECO:0000250" key="1">
    <source>
        <dbReference type="UniProtKB" id="P50389"/>
    </source>
</evidence>
<evidence type="ECO:0000255" key="2">
    <source>
        <dbReference type="HAMAP-Rule" id="MF_01627"/>
    </source>
</evidence>
<reference key="1">
    <citation type="journal article" date="2006" name="J. Bacteriol.">
        <title>Complete genome sequence of Yersinia pestis strains Antiqua and Nepal516: evidence of gene reduction in an emerging pathogen.</title>
        <authorList>
            <person name="Chain P.S.G."/>
            <person name="Hu P."/>
            <person name="Malfatti S.A."/>
            <person name="Radnedge L."/>
            <person name="Larimer F."/>
            <person name="Vergez L.M."/>
            <person name="Worsham P."/>
            <person name="Chu M.C."/>
            <person name="Andersen G.L."/>
        </authorList>
    </citation>
    <scope>NUCLEOTIDE SEQUENCE [LARGE SCALE GENOMIC DNA]</scope>
    <source>
        <strain>Antiqua</strain>
    </source>
</reference>